<name>BANP_XENTR</name>
<dbReference type="EMBL" id="CR848615">
    <property type="protein sequence ID" value="CAJ83575.1"/>
    <property type="status" value="ALT_INIT"/>
    <property type="molecule type" value="mRNA"/>
</dbReference>
<dbReference type="EMBL" id="BC063204">
    <property type="protein sequence ID" value="AAH63204.1"/>
    <property type="molecule type" value="mRNA"/>
</dbReference>
<dbReference type="EMBL" id="BC081348">
    <property type="protein sequence ID" value="AAH81348.1"/>
    <property type="molecule type" value="mRNA"/>
</dbReference>
<dbReference type="RefSeq" id="NP_989195.1">
    <property type="nucleotide sequence ID" value="NM_203864.1"/>
</dbReference>
<dbReference type="SMR" id="Q6P4Y1"/>
<dbReference type="FunCoup" id="Q6P4Y1">
    <property type="interactions" value="1926"/>
</dbReference>
<dbReference type="STRING" id="8364.ENSXETP00000046076"/>
<dbReference type="PaxDb" id="8364-ENSXETP00000036213"/>
<dbReference type="DNASU" id="394803"/>
<dbReference type="GeneID" id="394803"/>
<dbReference type="KEGG" id="xtr:394803"/>
<dbReference type="AGR" id="Xenbase:XB-GENE-944402"/>
<dbReference type="CTD" id="54971"/>
<dbReference type="Xenbase" id="XB-GENE-944402">
    <property type="gene designation" value="banp"/>
</dbReference>
<dbReference type="eggNOG" id="ENOG502QRIF">
    <property type="taxonomic scope" value="Eukaryota"/>
</dbReference>
<dbReference type="InParanoid" id="Q6P4Y1"/>
<dbReference type="OMA" id="TQQVQIH"/>
<dbReference type="OrthoDB" id="10052653at2759"/>
<dbReference type="Reactome" id="R-XTR-6804759">
    <property type="pathway name" value="Regulation of TP53 Activity through Association with Co-factors"/>
</dbReference>
<dbReference type="Proteomes" id="UP000008143">
    <property type="component" value="Chromosome 4"/>
</dbReference>
<dbReference type="Bgee" id="ENSXETG00000016600">
    <property type="expression patterns" value="Expressed in egg cell and 15 other cell types or tissues"/>
</dbReference>
<dbReference type="GO" id="GO:0005634">
    <property type="term" value="C:nucleus"/>
    <property type="evidence" value="ECO:0007669"/>
    <property type="project" value="UniProtKB-SubCell"/>
</dbReference>
<dbReference type="GO" id="GO:0003677">
    <property type="term" value="F:DNA binding"/>
    <property type="evidence" value="ECO:0007669"/>
    <property type="project" value="UniProtKB-KW"/>
</dbReference>
<dbReference type="GO" id="GO:0006325">
    <property type="term" value="P:chromatin organization"/>
    <property type="evidence" value="ECO:0007669"/>
    <property type="project" value="UniProtKB-KW"/>
</dbReference>
<dbReference type="FunFam" id="1.10.10.2590:FF:000001">
    <property type="entry name" value="protein BANP isoform X1"/>
    <property type="match status" value="1"/>
</dbReference>
<dbReference type="Gene3D" id="1.10.10.2590">
    <property type="entry name" value="BEN domain"/>
    <property type="match status" value="1"/>
</dbReference>
<dbReference type="InterPro" id="IPR042343">
    <property type="entry name" value="BANP"/>
</dbReference>
<dbReference type="InterPro" id="IPR018379">
    <property type="entry name" value="BEN_domain"/>
</dbReference>
<dbReference type="PANTHER" id="PTHR16243">
    <property type="entry name" value="BTG3-ASSOCIATED NUCLEAR PROTEIN BANP"/>
    <property type="match status" value="1"/>
</dbReference>
<dbReference type="PANTHER" id="PTHR16243:SF2">
    <property type="entry name" value="PROTEIN BANP"/>
    <property type="match status" value="1"/>
</dbReference>
<dbReference type="Pfam" id="PF10523">
    <property type="entry name" value="BEN"/>
    <property type="match status" value="1"/>
</dbReference>
<dbReference type="SMART" id="SM01025">
    <property type="entry name" value="BEN"/>
    <property type="match status" value="1"/>
</dbReference>
<dbReference type="PROSITE" id="PS51457">
    <property type="entry name" value="BEN"/>
    <property type="match status" value="1"/>
</dbReference>
<gene>
    <name type="primary">banp</name>
    <name type="ORF">TGas051e24.1</name>
</gene>
<proteinExistence type="evidence at transcript level"/>
<evidence type="ECO:0000250" key="1"/>
<evidence type="ECO:0000250" key="2">
    <source>
        <dbReference type="UniProtKB" id="Q8VBU8"/>
    </source>
</evidence>
<evidence type="ECO:0000255" key="3"/>
<evidence type="ECO:0000255" key="4">
    <source>
        <dbReference type="PROSITE-ProRule" id="PRU00784"/>
    </source>
</evidence>
<evidence type="ECO:0000256" key="5">
    <source>
        <dbReference type="SAM" id="MobiDB-lite"/>
    </source>
</evidence>
<evidence type="ECO:0000305" key="6"/>
<organism>
    <name type="scientific">Xenopus tropicalis</name>
    <name type="common">Western clawed frog</name>
    <name type="synonym">Silurana tropicalis</name>
    <dbReference type="NCBI Taxonomy" id="8364"/>
    <lineage>
        <taxon>Eukaryota</taxon>
        <taxon>Metazoa</taxon>
        <taxon>Chordata</taxon>
        <taxon>Craniata</taxon>
        <taxon>Vertebrata</taxon>
        <taxon>Euteleostomi</taxon>
        <taxon>Amphibia</taxon>
        <taxon>Batrachia</taxon>
        <taxon>Anura</taxon>
        <taxon>Pipoidea</taxon>
        <taxon>Pipidae</taxon>
        <taxon>Xenopodinae</taxon>
        <taxon>Xenopus</taxon>
        <taxon>Silurana</taxon>
    </lineage>
</organism>
<sequence>MMSGQELAEVVQIAVEDLHPGHHPVVLENHEVTEEDLSPTLKRQRIEINCQDPSIKSFLFSINQTICLRLDSIESKLQVLEATCKSLEEKLDLIMNKQQNPVQVPVVAGSPLGATQTWNKVRCVVPQTTVILNSERQTPGVTKLEGREESINSSTETLENMLNSAVPGRRHNTIVVKVPAPEDSHNDDDNDSGSEASDTLSNCGNSGNPNMGNNVTLITLNSEEDYPNGTWLGDEHNPEMRVRSPITAADMLHISTNCRTAEKMALTLLDYLFHREIQAISNLSGQGKHGKKQLDPLMIYGIRCHLFHKFRITESDWYRIKQSIDSKCRTAWRRKQRGQSLAVKSFSRRTPSSSSYSTTEGVQNTVSSSSDLQQTSPQALHYALANAQQVQIHQIGEDGQVQVGHLHIAQVPQGEQVQITQDSEGNLQIHQVHVGQDGQVLQGAQLIAVASADPTAGVVDGSPLQANDIQVQYVQLAPVAEPSATAQAVEPLQSALQPEMHIEHGSIQIQ</sequence>
<reference key="1">
    <citation type="submission" date="2006-10" db="EMBL/GenBank/DDBJ databases">
        <authorList>
            <consortium name="Sanger Xenopus tropicalis EST/cDNA project"/>
        </authorList>
    </citation>
    <scope>NUCLEOTIDE SEQUENCE [LARGE SCALE MRNA]</scope>
    <source>
        <tissue>Gastrula</tissue>
    </source>
</reference>
<reference key="2">
    <citation type="submission" date="2003-12" db="EMBL/GenBank/DDBJ databases">
        <authorList>
            <consortium name="NIH - Xenopus Gene Collection (XGC) project"/>
        </authorList>
    </citation>
    <scope>NUCLEOTIDE SEQUENCE [LARGE SCALE MRNA]</scope>
    <source>
        <tissue>Embryo</tissue>
    </source>
</reference>
<comment type="function">
    <text evidence="1 2">DNA-binding protein which may repress cyclin D1 transcription by recruiting HDAC1 to its promoter, thereby diminishing H3K9ac, H3S10ph and H4K8ac levels. Promotes activation, which causes cell cycle arrest (By similarity).</text>
</comment>
<comment type="subcellular location">
    <subcellularLocation>
        <location evidence="1">Nucleus</location>
    </subcellularLocation>
</comment>
<comment type="similarity">
    <text evidence="6">Belongs to the BANP/SMAR1 family.</text>
</comment>
<comment type="sequence caution" evidence="6">
    <conflict type="erroneous initiation">
        <sequence resource="EMBL-CDS" id="CAJ83575"/>
    </conflict>
</comment>
<accession>Q6P4Y1</accession>
<accession>Q28DS9</accession>
<protein>
    <recommendedName>
        <fullName>Protein BANP</fullName>
    </recommendedName>
</protein>
<feature type="chain" id="PRO_0000297914" description="Protein BANP">
    <location>
        <begin position="1"/>
        <end position="510"/>
    </location>
</feature>
<feature type="domain" description="BEN" evidence="4">
    <location>
        <begin position="239"/>
        <end position="335"/>
    </location>
</feature>
<feature type="region of interest" description="Disordered" evidence="5">
    <location>
        <begin position="178"/>
        <end position="212"/>
    </location>
</feature>
<feature type="region of interest" description="Disordered" evidence="5">
    <location>
        <begin position="343"/>
        <end position="371"/>
    </location>
</feature>
<feature type="coiled-coil region" evidence="3">
    <location>
        <begin position="68"/>
        <end position="100"/>
    </location>
</feature>
<feature type="compositionally biased region" description="Polar residues" evidence="5">
    <location>
        <begin position="193"/>
        <end position="212"/>
    </location>
</feature>
<feature type="compositionally biased region" description="Low complexity" evidence="5">
    <location>
        <begin position="348"/>
        <end position="359"/>
    </location>
</feature>
<feature type="compositionally biased region" description="Polar residues" evidence="5">
    <location>
        <begin position="360"/>
        <end position="371"/>
    </location>
</feature>
<keyword id="KW-0131">Cell cycle</keyword>
<keyword id="KW-0156">Chromatin regulator</keyword>
<keyword id="KW-0175">Coiled coil</keyword>
<keyword id="KW-0238">DNA-binding</keyword>
<keyword id="KW-0539">Nucleus</keyword>
<keyword id="KW-1185">Reference proteome</keyword>
<keyword id="KW-0678">Repressor</keyword>
<keyword id="KW-0804">Transcription</keyword>
<keyword id="KW-0805">Transcription regulation</keyword>